<sequence>MNKFLKEFKDRGFFYQCTGEENLSQLLDKEKIRAYIGFDCTAESLHVGSLLQIMCLRLLQKHGHQPIVLLGGGTTRIGDPSGKDKTRTILSEDEIEKNINNIEKILKNFLDDKDPETKPIFVNNYTWLKNLNYISFLRDVGKHFTINKMLSFDSVKIRLEREQSLSYMEFNYMILQAYDFLELNKKEKCMLQIGGSDQWGNIVNGVDLIKRYSNNHVYGLTTPLITLASGAKMGKTESGAVWLDKKFLSSYDYWQFWRNIDDRDVLKFLKIFTDINVDEIENIKDDNINELKILLANKATSMLHGEDEARKCQETAKQTFSENSLGDNLPTTQINKKMLDDNISILDLVILSKLESSKSEIRRLIKGNGIKINGQAISDEKFLITEDLFKSSLIKLSLGKKKHIKVELI</sequence>
<reference key="1">
    <citation type="journal article" date="2005" name="Science">
        <title>Genome streamlining in a cosmopolitan oceanic bacterium.</title>
        <authorList>
            <person name="Giovannoni S.J."/>
            <person name="Tripp H.J."/>
            <person name="Givan S."/>
            <person name="Podar M."/>
            <person name="Vergin K.L."/>
            <person name="Baptista D."/>
            <person name="Bibbs L."/>
            <person name="Eads J."/>
            <person name="Richardson T.H."/>
            <person name="Noordewier M."/>
            <person name="Rappe M.S."/>
            <person name="Short J.M."/>
            <person name="Carrington J.C."/>
            <person name="Mathur E.J."/>
        </authorList>
    </citation>
    <scope>NUCLEOTIDE SEQUENCE [LARGE SCALE GENOMIC DNA]</scope>
    <source>
        <strain>HTCC1062</strain>
    </source>
</reference>
<keyword id="KW-0030">Aminoacyl-tRNA synthetase</keyword>
<keyword id="KW-0067">ATP-binding</keyword>
<keyword id="KW-0963">Cytoplasm</keyword>
<keyword id="KW-0436">Ligase</keyword>
<keyword id="KW-0547">Nucleotide-binding</keyword>
<keyword id="KW-0648">Protein biosynthesis</keyword>
<keyword id="KW-1185">Reference proteome</keyword>
<keyword id="KW-0694">RNA-binding</keyword>
<evidence type="ECO:0000255" key="1">
    <source>
        <dbReference type="HAMAP-Rule" id="MF_02006"/>
    </source>
</evidence>
<feature type="chain" id="PRO_0000234748" description="Tyrosine--tRNA ligase">
    <location>
        <begin position="1"/>
        <end position="409"/>
    </location>
</feature>
<feature type="domain" description="S4 RNA-binding" evidence="1">
    <location>
        <begin position="343"/>
        <end position="409"/>
    </location>
</feature>
<feature type="short sequence motif" description="'HIGH' region">
    <location>
        <begin position="40"/>
        <end position="49"/>
    </location>
</feature>
<feature type="short sequence motif" description="'KMSKS' region">
    <location>
        <begin position="232"/>
        <end position="236"/>
    </location>
</feature>
<feature type="binding site" evidence="1">
    <location>
        <position position="35"/>
    </location>
    <ligand>
        <name>L-tyrosine</name>
        <dbReference type="ChEBI" id="CHEBI:58315"/>
    </ligand>
</feature>
<feature type="binding site" evidence="1">
    <location>
        <position position="172"/>
    </location>
    <ligand>
        <name>L-tyrosine</name>
        <dbReference type="ChEBI" id="CHEBI:58315"/>
    </ligand>
</feature>
<feature type="binding site" evidence="1">
    <location>
        <position position="176"/>
    </location>
    <ligand>
        <name>L-tyrosine</name>
        <dbReference type="ChEBI" id="CHEBI:58315"/>
    </ligand>
</feature>
<feature type="binding site" evidence="1">
    <location>
        <position position="235"/>
    </location>
    <ligand>
        <name>ATP</name>
        <dbReference type="ChEBI" id="CHEBI:30616"/>
    </ligand>
</feature>
<gene>
    <name evidence="1" type="primary">tyrS</name>
    <name type="ordered locus">SAR11_0735</name>
</gene>
<accession>Q4FMN5</accession>
<dbReference type="EC" id="6.1.1.1" evidence="1"/>
<dbReference type="EMBL" id="CP000084">
    <property type="protein sequence ID" value="AAZ21554.1"/>
    <property type="molecule type" value="Genomic_DNA"/>
</dbReference>
<dbReference type="RefSeq" id="WP_011281903.1">
    <property type="nucleotide sequence ID" value="NC_007205.1"/>
</dbReference>
<dbReference type="SMR" id="Q4FMN5"/>
<dbReference type="STRING" id="335992.SAR11_0735"/>
<dbReference type="GeneID" id="66295238"/>
<dbReference type="KEGG" id="pub:SAR11_0735"/>
<dbReference type="eggNOG" id="COG0162">
    <property type="taxonomic scope" value="Bacteria"/>
</dbReference>
<dbReference type="HOGENOM" id="CLU_024003_0_3_5"/>
<dbReference type="OrthoDB" id="9804243at2"/>
<dbReference type="Proteomes" id="UP000002528">
    <property type="component" value="Chromosome"/>
</dbReference>
<dbReference type="GO" id="GO:0005829">
    <property type="term" value="C:cytosol"/>
    <property type="evidence" value="ECO:0007669"/>
    <property type="project" value="TreeGrafter"/>
</dbReference>
<dbReference type="GO" id="GO:0005524">
    <property type="term" value="F:ATP binding"/>
    <property type="evidence" value="ECO:0007669"/>
    <property type="project" value="UniProtKB-UniRule"/>
</dbReference>
<dbReference type="GO" id="GO:0003723">
    <property type="term" value="F:RNA binding"/>
    <property type="evidence" value="ECO:0007669"/>
    <property type="project" value="UniProtKB-KW"/>
</dbReference>
<dbReference type="GO" id="GO:0004831">
    <property type="term" value="F:tyrosine-tRNA ligase activity"/>
    <property type="evidence" value="ECO:0007669"/>
    <property type="project" value="UniProtKB-UniRule"/>
</dbReference>
<dbReference type="GO" id="GO:0006437">
    <property type="term" value="P:tyrosyl-tRNA aminoacylation"/>
    <property type="evidence" value="ECO:0007669"/>
    <property type="project" value="UniProtKB-UniRule"/>
</dbReference>
<dbReference type="CDD" id="cd00165">
    <property type="entry name" value="S4"/>
    <property type="match status" value="1"/>
</dbReference>
<dbReference type="CDD" id="cd00805">
    <property type="entry name" value="TyrRS_core"/>
    <property type="match status" value="1"/>
</dbReference>
<dbReference type="FunFam" id="1.10.240.10:FF:000001">
    <property type="entry name" value="Tyrosine--tRNA ligase"/>
    <property type="match status" value="1"/>
</dbReference>
<dbReference type="FunFam" id="3.40.50.620:FF:000008">
    <property type="entry name" value="Tyrosine--tRNA ligase"/>
    <property type="match status" value="1"/>
</dbReference>
<dbReference type="Gene3D" id="3.40.50.620">
    <property type="entry name" value="HUPs"/>
    <property type="match status" value="1"/>
</dbReference>
<dbReference type="Gene3D" id="3.10.290.10">
    <property type="entry name" value="RNA-binding S4 domain"/>
    <property type="match status" value="1"/>
</dbReference>
<dbReference type="Gene3D" id="1.10.240.10">
    <property type="entry name" value="Tyrosyl-Transfer RNA Synthetase"/>
    <property type="match status" value="1"/>
</dbReference>
<dbReference type="HAMAP" id="MF_02006">
    <property type="entry name" value="Tyr_tRNA_synth_type1"/>
    <property type="match status" value="1"/>
</dbReference>
<dbReference type="InterPro" id="IPR002305">
    <property type="entry name" value="aa-tRNA-synth_Ic"/>
</dbReference>
<dbReference type="InterPro" id="IPR014729">
    <property type="entry name" value="Rossmann-like_a/b/a_fold"/>
</dbReference>
<dbReference type="InterPro" id="IPR036986">
    <property type="entry name" value="S4_RNA-bd_sf"/>
</dbReference>
<dbReference type="InterPro" id="IPR054608">
    <property type="entry name" value="SYY-like_C"/>
</dbReference>
<dbReference type="InterPro" id="IPR002307">
    <property type="entry name" value="Tyr-tRNA-ligase"/>
</dbReference>
<dbReference type="InterPro" id="IPR024088">
    <property type="entry name" value="Tyr-tRNA-ligase_bac-type"/>
</dbReference>
<dbReference type="InterPro" id="IPR024107">
    <property type="entry name" value="Tyr-tRNA-ligase_bac_1"/>
</dbReference>
<dbReference type="NCBIfam" id="TIGR00234">
    <property type="entry name" value="tyrS"/>
    <property type="match status" value="1"/>
</dbReference>
<dbReference type="PANTHER" id="PTHR11766:SF0">
    <property type="entry name" value="TYROSINE--TRNA LIGASE, MITOCHONDRIAL"/>
    <property type="match status" value="1"/>
</dbReference>
<dbReference type="PANTHER" id="PTHR11766">
    <property type="entry name" value="TYROSYL-TRNA SYNTHETASE"/>
    <property type="match status" value="1"/>
</dbReference>
<dbReference type="Pfam" id="PF22421">
    <property type="entry name" value="SYY_C-terminal"/>
    <property type="match status" value="1"/>
</dbReference>
<dbReference type="Pfam" id="PF00579">
    <property type="entry name" value="tRNA-synt_1b"/>
    <property type="match status" value="1"/>
</dbReference>
<dbReference type="PRINTS" id="PR01040">
    <property type="entry name" value="TRNASYNTHTYR"/>
</dbReference>
<dbReference type="SUPFAM" id="SSF55174">
    <property type="entry name" value="Alpha-L RNA-binding motif"/>
    <property type="match status" value="1"/>
</dbReference>
<dbReference type="SUPFAM" id="SSF52374">
    <property type="entry name" value="Nucleotidylyl transferase"/>
    <property type="match status" value="1"/>
</dbReference>
<dbReference type="PROSITE" id="PS50889">
    <property type="entry name" value="S4"/>
    <property type="match status" value="1"/>
</dbReference>
<name>SYY_PELUB</name>
<organism>
    <name type="scientific">Pelagibacter ubique (strain HTCC1062)</name>
    <dbReference type="NCBI Taxonomy" id="335992"/>
    <lineage>
        <taxon>Bacteria</taxon>
        <taxon>Pseudomonadati</taxon>
        <taxon>Pseudomonadota</taxon>
        <taxon>Alphaproteobacteria</taxon>
        <taxon>Candidatus Pelagibacterales</taxon>
        <taxon>Candidatus Pelagibacteraceae</taxon>
        <taxon>Candidatus Pelagibacter</taxon>
    </lineage>
</organism>
<comment type="function">
    <text evidence="1">Catalyzes the attachment of tyrosine to tRNA(Tyr) in a two-step reaction: tyrosine is first activated by ATP to form Tyr-AMP and then transferred to the acceptor end of tRNA(Tyr).</text>
</comment>
<comment type="catalytic activity">
    <reaction evidence="1">
        <text>tRNA(Tyr) + L-tyrosine + ATP = L-tyrosyl-tRNA(Tyr) + AMP + diphosphate + H(+)</text>
        <dbReference type="Rhea" id="RHEA:10220"/>
        <dbReference type="Rhea" id="RHEA-COMP:9706"/>
        <dbReference type="Rhea" id="RHEA-COMP:9707"/>
        <dbReference type="ChEBI" id="CHEBI:15378"/>
        <dbReference type="ChEBI" id="CHEBI:30616"/>
        <dbReference type="ChEBI" id="CHEBI:33019"/>
        <dbReference type="ChEBI" id="CHEBI:58315"/>
        <dbReference type="ChEBI" id="CHEBI:78442"/>
        <dbReference type="ChEBI" id="CHEBI:78536"/>
        <dbReference type="ChEBI" id="CHEBI:456215"/>
        <dbReference type="EC" id="6.1.1.1"/>
    </reaction>
</comment>
<comment type="subunit">
    <text evidence="1">Homodimer.</text>
</comment>
<comment type="subcellular location">
    <subcellularLocation>
        <location evidence="1">Cytoplasm</location>
    </subcellularLocation>
</comment>
<comment type="similarity">
    <text evidence="1">Belongs to the class-I aminoacyl-tRNA synthetase family. TyrS type 1 subfamily.</text>
</comment>
<proteinExistence type="inferred from homology"/>
<protein>
    <recommendedName>
        <fullName evidence="1">Tyrosine--tRNA ligase</fullName>
        <ecNumber evidence="1">6.1.1.1</ecNumber>
    </recommendedName>
    <alternativeName>
        <fullName evidence="1">Tyrosyl-tRNA synthetase</fullName>
        <shortName evidence="1">TyrRS</shortName>
    </alternativeName>
</protein>